<comment type="function">
    <text>Inhibits both subtilisin and chymotrypsin.</text>
</comment>
<comment type="similarity">
    <text evidence="1">Belongs to the protease inhibitor I13 (potato type I serine protease inhibitor) family.</text>
</comment>
<evidence type="ECO:0000305" key="1"/>
<protein>
    <recommendedName>
        <fullName>Subtilisin-chymotrypsin inhibitor CI-1C</fullName>
    </recommendedName>
</protein>
<name>ICIC_HORVU</name>
<organism>
    <name type="scientific">Hordeum vulgare</name>
    <name type="common">Barley</name>
    <dbReference type="NCBI Taxonomy" id="4513"/>
    <lineage>
        <taxon>Eukaryota</taxon>
        <taxon>Viridiplantae</taxon>
        <taxon>Streptophyta</taxon>
        <taxon>Embryophyta</taxon>
        <taxon>Tracheophyta</taxon>
        <taxon>Spermatophyta</taxon>
        <taxon>Magnoliopsida</taxon>
        <taxon>Liliopsida</taxon>
        <taxon>Poales</taxon>
        <taxon>Poaceae</taxon>
        <taxon>BOP clade</taxon>
        <taxon>Pooideae</taxon>
        <taxon>Triticodae</taxon>
        <taxon>Triticeae</taxon>
        <taxon>Hordeinae</taxon>
        <taxon>Hordeum</taxon>
    </lineage>
</organism>
<proteinExistence type="evidence at protein level"/>
<feature type="chain" id="PRO_0000217646" description="Subtilisin-chymotrypsin inhibitor CI-1C">
    <location>
        <begin position="1"/>
        <end position="77"/>
    </location>
</feature>
<feature type="site" description="Reactive bond for subtilisin">
    <location>
        <begin position="24"/>
        <end position="25"/>
    </location>
</feature>
<feature type="site" description="Reactive bond for chymotrypsin and subtilisin">
    <location>
        <begin position="53"/>
        <end position="54"/>
    </location>
</feature>
<dbReference type="PIR" id="A01293">
    <property type="entry name" value="EIBH1C"/>
</dbReference>
<dbReference type="MEROPS" id="I13.005"/>
<dbReference type="ExpressionAtlas" id="P01054">
    <property type="expression patterns" value="baseline"/>
</dbReference>
<dbReference type="GO" id="GO:0004867">
    <property type="term" value="F:serine-type endopeptidase inhibitor activity"/>
    <property type="evidence" value="ECO:0007669"/>
    <property type="project" value="UniProtKB-KW"/>
</dbReference>
<dbReference type="GO" id="GO:0009611">
    <property type="term" value="P:response to wounding"/>
    <property type="evidence" value="ECO:0007669"/>
    <property type="project" value="InterPro"/>
</dbReference>
<dbReference type="Gene3D" id="3.30.10.10">
    <property type="entry name" value="Trypsin Inhibitor V, subunit A"/>
    <property type="match status" value="1"/>
</dbReference>
<dbReference type="InterPro" id="IPR000864">
    <property type="entry name" value="Prot_inh_pot1"/>
</dbReference>
<dbReference type="InterPro" id="IPR036354">
    <property type="entry name" value="Prot_inh_pot1_sf"/>
</dbReference>
<dbReference type="PANTHER" id="PTHR33091">
    <property type="entry name" value="PROTEIN, PUTATIVE, EXPRESSED-RELATED"/>
    <property type="match status" value="1"/>
</dbReference>
<dbReference type="PANTHER" id="PTHR33091:SF46">
    <property type="entry name" value="SUBTILISIN-CHYMOTRYPSIN INHIBITOR-2A"/>
    <property type="match status" value="1"/>
</dbReference>
<dbReference type="Pfam" id="PF00280">
    <property type="entry name" value="potato_inhibit"/>
    <property type="match status" value="1"/>
</dbReference>
<dbReference type="PRINTS" id="PR00292">
    <property type="entry name" value="POTATOINHBTR"/>
</dbReference>
<dbReference type="SUPFAM" id="SSF54654">
    <property type="entry name" value="CI-2 family of serine protease inhibitors"/>
    <property type="match status" value="1"/>
</dbReference>
<dbReference type="PROSITE" id="PS00285">
    <property type="entry name" value="POTATO_INHIBITOR"/>
    <property type="match status" value="1"/>
</dbReference>
<keyword id="KW-0903">Direct protein sequencing</keyword>
<keyword id="KW-0646">Protease inhibitor</keyword>
<keyword id="KW-0722">Serine protease inhibitor</keyword>
<accession>P01054</accession>
<reference key="1">
    <citation type="journal article" date="1982" name="Carlsberg Res. Commun.">
        <title>Amino acid sequence of serine protease inhibitor CI-1 from barley. Homology with barley inhibitor CI-2, potato inhibitor I, and leech eglin.</title>
        <authorList>
            <person name="Svendsen I."/>
            <person name="Boisen S."/>
            <person name="Hejgaard J."/>
        </authorList>
    </citation>
    <scope>PROTEIN SEQUENCE</scope>
</reference>
<reference key="2">
    <citation type="journal article" date="1982" name="Carlsberg Res. Commun.">
        <title>Identification of the reactive sites in two homologous serine proteinase inhibitors isolated from barley.</title>
        <authorList>
            <person name="Jonassen I."/>
            <person name="Svendsen I."/>
        </authorList>
    </citation>
    <scope>REACTIVE SITE</scope>
</reference>
<sequence>YPEPTEGSIGASGAKTSWPEVVGMSAEKAKEIILRDKPNAQIEVIPVDAMVPLNFNPNRVFVLVHKATTVAZVSRVG</sequence>